<name>PIGM_RHOER</name>
<feature type="chain" id="PRO_0000058436" description="Pigment production hydroxylase">
    <location>
        <begin position="1"/>
        <end position="393"/>
    </location>
</feature>
<proteinExistence type="predicted"/>
<comment type="function">
    <text>Involved in pigment production acting as a hydroxylase that transforms indole to indoxyl, resulting in the formation of indigo.</text>
</comment>
<organism>
    <name type="scientific">Rhodococcus erythropolis</name>
    <name type="common">Arthrobacter picolinophilus</name>
    <dbReference type="NCBI Taxonomy" id="1833"/>
    <lineage>
        <taxon>Bacteria</taxon>
        <taxon>Bacillati</taxon>
        <taxon>Actinomycetota</taxon>
        <taxon>Actinomycetes</taxon>
        <taxon>Mycobacteriales</taxon>
        <taxon>Nocardiaceae</taxon>
        <taxon>Rhodococcus</taxon>
        <taxon>Rhodococcus erythropolis group</taxon>
    </lineage>
</organism>
<protein>
    <recommendedName>
        <fullName>Pigment production hydroxylase</fullName>
        <ecNumber>1.-.-.-</ecNumber>
    </recommendedName>
</protein>
<reference key="1">
    <citation type="journal article" date="1997" name="Appl. Environ. Microbiol.">
        <title>Three of the seven bphC genes of Rhodococcus erythropolis TA421, isolated from a termite ecosystem, are located on an indigenous plasmid associated with biphenyl degradation.</title>
        <authorList>
            <person name="Kosono S."/>
            <person name="Maeda M."/>
            <person name="Fuji F."/>
            <person name="Arai H."/>
            <person name="Kudo T."/>
        </authorList>
    </citation>
    <scope>NUCLEOTIDE SEQUENCE [GENOMIC DNA]</scope>
    <source>
        <strain>TA421</strain>
    </source>
</reference>
<sequence>MTYEVLEQINAMADDIFAEGIEAERIGRVADDTAKKMKAIGSIRMLQPKEHGGMEAHPREFAETVMRMASLNPSAGWVHGIVGVHPWQLAFADPKVQQEIWGSDPDTWMASPYMPGGMCIPTDGGYKFSGRWQFSSGTDHCDWAFLGAMACDKDGNMEMPPRMLHVIIPRTDYEIIEDSWDVMGLRGTGSKDLVVKDAYVPDYRVMDCDEVIDGTAVRKYGRTETLYLMPWSNMFPLGITAATIGICEGMLFHANEYQAGRINAQGTAVKDDPYTLFAIGQATADIRAARDTLLANVDRMWDRVDAGKEVTFEQRAEGRQTQVQAAWRAINAIDQVYPRCGGNALRMDKPLQRFWRDAHAGQHHAIHVPGTVFHAASLSRLGADPQGPLRAMI</sequence>
<accession>O69349</accession>
<dbReference type="EC" id="1.-.-.-"/>
<dbReference type="EMBL" id="D88013">
    <property type="protein sequence ID" value="BAA25602.1"/>
    <property type="molecule type" value="Genomic_DNA"/>
</dbReference>
<dbReference type="SMR" id="O69349"/>
<dbReference type="STRING" id="1833.XU06_06755"/>
<dbReference type="GO" id="GO:0005737">
    <property type="term" value="C:cytoplasm"/>
    <property type="evidence" value="ECO:0007669"/>
    <property type="project" value="TreeGrafter"/>
</dbReference>
<dbReference type="GO" id="GO:0003995">
    <property type="term" value="F:acyl-CoA dehydrogenase activity"/>
    <property type="evidence" value="ECO:0007669"/>
    <property type="project" value="TreeGrafter"/>
</dbReference>
<dbReference type="GO" id="GO:0050660">
    <property type="term" value="F:flavin adenine dinucleotide binding"/>
    <property type="evidence" value="ECO:0007669"/>
    <property type="project" value="InterPro"/>
</dbReference>
<dbReference type="GO" id="GO:0016712">
    <property type="term" value="F:oxidoreductase activity, acting on paired donors, with incorporation or reduction of molecular oxygen, reduced flavin or flavoprotein as one donor, and incorporation of one atom of oxygen"/>
    <property type="evidence" value="ECO:0007669"/>
    <property type="project" value="TreeGrafter"/>
</dbReference>
<dbReference type="GO" id="GO:0031409">
    <property type="term" value="F:pigment binding"/>
    <property type="evidence" value="ECO:0007669"/>
    <property type="project" value="UniProtKB-KW"/>
</dbReference>
<dbReference type="GO" id="GO:0033539">
    <property type="term" value="P:fatty acid beta-oxidation using acyl-CoA dehydrogenase"/>
    <property type="evidence" value="ECO:0007669"/>
    <property type="project" value="TreeGrafter"/>
</dbReference>
<dbReference type="Gene3D" id="1.10.540.10">
    <property type="entry name" value="Acyl-CoA dehydrogenase/oxidase, N-terminal domain"/>
    <property type="match status" value="1"/>
</dbReference>
<dbReference type="Gene3D" id="2.40.110.10">
    <property type="entry name" value="Butyryl-CoA Dehydrogenase, subunit A, domain 2"/>
    <property type="match status" value="1"/>
</dbReference>
<dbReference type="Gene3D" id="1.20.140.10">
    <property type="entry name" value="Butyryl-CoA Dehydrogenase, subunit A, domain 3"/>
    <property type="match status" value="1"/>
</dbReference>
<dbReference type="InterPro" id="IPR050741">
    <property type="entry name" value="Acyl-CoA_dehydrogenase"/>
</dbReference>
<dbReference type="InterPro" id="IPR013107">
    <property type="entry name" value="Acyl-CoA_DH_C"/>
</dbReference>
<dbReference type="InterPro" id="IPR046373">
    <property type="entry name" value="Acyl-CoA_Oxase/DH_mid-dom_sf"/>
</dbReference>
<dbReference type="InterPro" id="IPR036250">
    <property type="entry name" value="AcylCo_DH-like_C"/>
</dbReference>
<dbReference type="InterPro" id="IPR037069">
    <property type="entry name" value="AcylCoA_DH/ox_N_sf"/>
</dbReference>
<dbReference type="InterPro" id="IPR009100">
    <property type="entry name" value="AcylCoA_DH/oxidase_NM_dom_sf"/>
</dbReference>
<dbReference type="PANTHER" id="PTHR48083:SF19">
    <property type="entry name" value="FLAVIN-DEPENDENT MONOOXYGENASE, OXYGENASE SUBUNIT HSAA"/>
    <property type="match status" value="1"/>
</dbReference>
<dbReference type="PANTHER" id="PTHR48083">
    <property type="entry name" value="MEDIUM-CHAIN SPECIFIC ACYL-COA DEHYDROGENASE, MITOCHONDRIAL-RELATED"/>
    <property type="match status" value="1"/>
</dbReference>
<dbReference type="Pfam" id="PF08028">
    <property type="entry name" value="Acyl-CoA_dh_2"/>
    <property type="match status" value="1"/>
</dbReference>
<dbReference type="PIRSF" id="PIRSF016578">
    <property type="entry name" value="HsaA"/>
    <property type="match status" value="1"/>
</dbReference>
<dbReference type="SUPFAM" id="SSF47203">
    <property type="entry name" value="Acyl-CoA dehydrogenase C-terminal domain-like"/>
    <property type="match status" value="1"/>
</dbReference>
<dbReference type="SUPFAM" id="SSF56645">
    <property type="entry name" value="Acyl-CoA dehydrogenase NM domain-like"/>
    <property type="match status" value="1"/>
</dbReference>
<keyword id="KW-0560">Oxidoreductase</keyword>
<keyword id="KW-0608">Pigment</keyword>